<proteinExistence type="inferred from homology"/>
<comment type="function">
    <text evidence="1">Participates actively in the response to hyperosmotic and heat shock by preventing the aggregation of stress-denatured proteins and by disaggregating proteins, also in an autonomous, DnaK-independent fashion. Unfolded proteins bind initially to DnaJ; upon interaction with the DnaJ-bound protein, DnaK hydrolyzes its bound ATP, resulting in the formation of a stable complex. GrpE releases ADP from DnaK; ATP binding to DnaK triggers the release of the substrate protein, thus completing the reaction cycle. Several rounds of ATP-dependent interactions between DnaJ, DnaK and GrpE are required for fully efficient folding. Also involved, together with DnaK and GrpE, in the DNA replication of plasmids through activation of initiation proteins.</text>
</comment>
<comment type="cofactor">
    <cofactor evidence="1">
        <name>Zn(2+)</name>
        <dbReference type="ChEBI" id="CHEBI:29105"/>
    </cofactor>
    <text evidence="1">Binds 2 Zn(2+) ions per monomer.</text>
</comment>
<comment type="subunit">
    <text evidence="1">Homodimer.</text>
</comment>
<comment type="subcellular location">
    <subcellularLocation>
        <location evidence="1">Cytoplasm</location>
    </subcellularLocation>
</comment>
<comment type="domain">
    <text evidence="1">The J domain is necessary and sufficient to stimulate DnaK ATPase activity. Zinc center 1 plays an important role in the autonomous, DnaK-independent chaperone activity of DnaJ. Zinc center 2 is essential for interaction with DnaK and for DnaJ activity.</text>
</comment>
<comment type="similarity">
    <text evidence="1">Belongs to the DnaJ family.</text>
</comment>
<gene>
    <name evidence="1" type="primary">dnaJ</name>
    <name type="ordered locus">TW492</name>
</gene>
<protein>
    <recommendedName>
        <fullName evidence="1">Chaperone protein DnaJ</fullName>
    </recommendedName>
</protein>
<organism>
    <name type="scientific">Tropheryma whipplei (strain TW08/27)</name>
    <name type="common">Whipple's bacillus</name>
    <dbReference type="NCBI Taxonomy" id="218496"/>
    <lineage>
        <taxon>Bacteria</taxon>
        <taxon>Bacillati</taxon>
        <taxon>Actinomycetota</taxon>
        <taxon>Actinomycetes</taxon>
        <taxon>Micrococcales</taxon>
        <taxon>Tropherymataceae</taxon>
        <taxon>Tropheryma</taxon>
    </lineage>
</organism>
<sequence length="348" mass="38521">MEDLYGILGVDHDASVDEIRRAYRRLARELHPDINPDSADRFKAVTHAYNILSDPEQRQRYDRHVSGGFSSDFNLSDLFQSFFDTSAEFQRGSDLLVNIDIDLKTAIYGGSQVVKIDSLVVCDVCNGTRSEPGYKAEVCFDCNGSGVVRGEVRTTLGNLITQNTCSKCRGNGERIDHPCRRCYGNGSRSAPRDITINIPPGVETGMRIKIPNMGNAGGAMPGDLYVDCKVKEHPYFLRDGQDLYCRLDISLVDALLGTKVKIDSLDGELAVVIPALSQNRDVIRIANKGAVTLRGGKGDLCIVLNVLLMQKLDPEHRALLKKIMPNPPKPKLAKRTSGFFSWLKNKFT</sequence>
<evidence type="ECO:0000255" key="1">
    <source>
        <dbReference type="HAMAP-Rule" id="MF_01152"/>
    </source>
</evidence>
<reference key="1">
    <citation type="journal article" date="2003" name="Lancet">
        <title>Sequencing and analysis of the genome of the Whipple's disease bacterium Tropheryma whipplei.</title>
        <authorList>
            <person name="Bentley S.D."/>
            <person name="Maiwald M."/>
            <person name="Murphy L.D."/>
            <person name="Pallen M.J."/>
            <person name="Yeats C.A."/>
            <person name="Dover L.G."/>
            <person name="Norbertczak H.T."/>
            <person name="Besra G.S."/>
            <person name="Quail M.A."/>
            <person name="Harris D.E."/>
            <person name="von Herbay A."/>
            <person name="Goble A."/>
            <person name="Rutter S."/>
            <person name="Squares R."/>
            <person name="Squares S."/>
            <person name="Barrell B.G."/>
            <person name="Parkhill J."/>
            <person name="Relman D.A."/>
        </authorList>
    </citation>
    <scope>NUCLEOTIDE SEQUENCE [LARGE SCALE GENOMIC DNA]</scope>
    <source>
        <strain>TW08/27</strain>
    </source>
</reference>
<keyword id="KW-0143">Chaperone</keyword>
<keyword id="KW-0963">Cytoplasm</keyword>
<keyword id="KW-0235">DNA replication</keyword>
<keyword id="KW-0479">Metal-binding</keyword>
<keyword id="KW-0677">Repeat</keyword>
<keyword id="KW-0346">Stress response</keyword>
<keyword id="KW-0862">Zinc</keyword>
<keyword id="KW-0863">Zinc-finger</keyword>
<accession>Q83NI2</accession>
<name>DNAJ_TROW8</name>
<dbReference type="EMBL" id="BX251411">
    <property type="protein sequence ID" value="CAD67159.1"/>
    <property type="molecule type" value="Genomic_DNA"/>
</dbReference>
<dbReference type="RefSeq" id="WP_011096439.1">
    <property type="nucleotide sequence ID" value="NC_004551.1"/>
</dbReference>
<dbReference type="SMR" id="Q83NI2"/>
<dbReference type="GeneID" id="67388271"/>
<dbReference type="KEGG" id="tws:TW492"/>
<dbReference type="HOGENOM" id="CLU_728707_0_0_11"/>
<dbReference type="GO" id="GO:0005737">
    <property type="term" value="C:cytoplasm"/>
    <property type="evidence" value="ECO:0007669"/>
    <property type="project" value="UniProtKB-SubCell"/>
</dbReference>
<dbReference type="GO" id="GO:0005524">
    <property type="term" value="F:ATP binding"/>
    <property type="evidence" value="ECO:0007669"/>
    <property type="project" value="InterPro"/>
</dbReference>
<dbReference type="GO" id="GO:0031072">
    <property type="term" value="F:heat shock protein binding"/>
    <property type="evidence" value="ECO:0007669"/>
    <property type="project" value="InterPro"/>
</dbReference>
<dbReference type="GO" id="GO:0051082">
    <property type="term" value="F:unfolded protein binding"/>
    <property type="evidence" value="ECO:0007669"/>
    <property type="project" value="UniProtKB-UniRule"/>
</dbReference>
<dbReference type="GO" id="GO:0008270">
    <property type="term" value="F:zinc ion binding"/>
    <property type="evidence" value="ECO:0007669"/>
    <property type="project" value="UniProtKB-UniRule"/>
</dbReference>
<dbReference type="GO" id="GO:0051085">
    <property type="term" value="P:chaperone cofactor-dependent protein refolding"/>
    <property type="evidence" value="ECO:0007669"/>
    <property type="project" value="TreeGrafter"/>
</dbReference>
<dbReference type="GO" id="GO:0006260">
    <property type="term" value="P:DNA replication"/>
    <property type="evidence" value="ECO:0007669"/>
    <property type="project" value="UniProtKB-KW"/>
</dbReference>
<dbReference type="GO" id="GO:0042026">
    <property type="term" value="P:protein refolding"/>
    <property type="evidence" value="ECO:0007669"/>
    <property type="project" value="TreeGrafter"/>
</dbReference>
<dbReference type="GO" id="GO:0009408">
    <property type="term" value="P:response to heat"/>
    <property type="evidence" value="ECO:0007669"/>
    <property type="project" value="InterPro"/>
</dbReference>
<dbReference type="CDD" id="cd06257">
    <property type="entry name" value="DnaJ"/>
    <property type="match status" value="1"/>
</dbReference>
<dbReference type="CDD" id="cd10747">
    <property type="entry name" value="DnaJ_C"/>
    <property type="match status" value="1"/>
</dbReference>
<dbReference type="CDD" id="cd10719">
    <property type="entry name" value="DnaJ_zf"/>
    <property type="match status" value="1"/>
</dbReference>
<dbReference type="FunFam" id="2.10.230.10:FF:000002">
    <property type="entry name" value="Molecular chaperone DnaJ"/>
    <property type="match status" value="1"/>
</dbReference>
<dbReference type="Gene3D" id="1.10.287.110">
    <property type="entry name" value="DnaJ domain"/>
    <property type="match status" value="1"/>
</dbReference>
<dbReference type="Gene3D" id="2.10.230.10">
    <property type="entry name" value="Heat shock protein DnaJ, cysteine-rich domain"/>
    <property type="match status" value="1"/>
</dbReference>
<dbReference type="Gene3D" id="2.60.260.20">
    <property type="entry name" value="Urease metallochaperone UreE, N-terminal domain"/>
    <property type="match status" value="2"/>
</dbReference>
<dbReference type="HAMAP" id="MF_01152">
    <property type="entry name" value="DnaJ"/>
    <property type="match status" value="1"/>
</dbReference>
<dbReference type="InterPro" id="IPR012724">
    <property type="entry name" value="DnaJ"/>
</dbReference>
<dbReference type="InterPro" id="IPR002939">
    <property type="entry name" value="DnaJ_C"/>
</dbReference>
<dbReference type="InterPro" id="IPR001623">
    <property type="entry name" value="DnaJ_domain"/>
</dbReference>
<dbReference type="InterPro" id="IPR018253">
    <property type="entry name" value="DnaJ_domain_CS"/>
</dbReference>
<dbReference type="InterPro" id="IPR008971">
    <property type="entry name" value="HSP40/DnaJ_pept-bd"/>
</dbReference>
<dbReference type="InterPro" id="IPR001305">
    <property type="entry name" value="HSP_DnaJ_Cys-rich_dom"/>
</dbReference>
<dbReference type="InterPro" id="IPR036410">
    <property type="entry name" value="HSP_DnaJ_Cys-rich_dom_sf"/>
</dbReference>
<dbReference type="InterPro" id="IPR036869">
    <property type="entry name" value="J_dom_sf"/>
</dbReference>
<dbReference type="PANTHER" id="PTHR43096:SF10">
    <property type="entry name" value="CHAPERONE PROTEIN DNAJ A6, CHLOROPLASTIC"/>
    <property type="match status" value="1"/>
</dbReference>
<dbReference type="PANTHER" id="PTHR43096">
    <property type="entry name" value="DNAJ HOMOLOG 1, MITOCHONDRIAL-RELATED"/>
    <property type="match status" value="1"/>
</dbReference>
<dbReference type="Pfam" id="PF00226">
    <property type="entry name" value="DnaJ"/>
    <property type="match status" value="1"/>
</dbReference>
<dbReference type="Pfam" id="PF01556">
    <property type="entry name" value="DnaJ_C"/>
    <property type="match status" value="1"/>
</dbReference>
<dbReference type="Pfam" id="PF00684">
    <property type="entry name" value="DnaJ_CXXCXGXG"/>
    <property type="match status" value="1"/>
</dbReference>
<dbReference type="PRINTS" id="PR00625">
    <property type="entry name" value="JDOMAIN"/>
</dbReference>
<dbReference type="SMART" id="SM00271">
    <property type="entry name" value="DnaJ"/>
    <property type="match status" value="1"/>
</dbReference>
<dbReference type="SUPFAM" id="SSF46565">
    <property type="entry name" value="Chaperone J-domain"/>
    <property type="match status" value="1"/>
</dbReference>
<dbReference type="SUPFAM" id="SSF57938">
    <property type="entry name" value="DnaJ/Hsp40 cysteine-rich domain"/>
    <property type="match status" value="1"/>
</dbReference>
<dbReference type="SUPFAM" id="SSF49493">
    <property type="entry name" value="HSP40/DnaJ peptide-binding domain"/>
    <property type="match status" value="2"/>
</dbReference>
<dbReference type="PROSITE" id="PS00636">
    <property type="entry name" value="DNAJ_1"/>
    <property type="match status" value="1"/>
</dbReference>
<dbReference type="PROSITE" id="PS50076">
    <property type="entry name" value="DNAJ_2"/>
    <property type="match status" value="1"/>
</dbReference>
<dbReference type="PROSITE" id="PS51188">
    <property type="entry name" value="ZF_CR"/>
    <property type="match status" value="1"/>
</dbReference>
<feature type="chain" id="PRO_0000070924" description="Chaperone protein DnaJ">
    <location>
        <begin position="1"/>
        <end position="348"/>
    </location>
</feature>
<feature type="domain" description="J" evidence="1">
    <location>
        <begin position="3"/>
        <end position="65"/>
    </location>
</feature>
<feature type="repeat" description="CXXCXGXG motif">
    <location>
        <begin position="122"/>
        <end position="129"/>
    </location>
</feature>
<feature type="repeat" description="CXXCXGXG motif">
    <location>
        <begin position="139"/>
        <end position="146"/>
    </location>
</feature>
<feature type="repeat" description="CXXCXGXG motif">
    <location>
        <begin position="165"/>
        <end position="172"/>
    </location>
</feature>
<feature type="repeat" description="CXXCXGXG motif">
    <location>
        <begin position="179"/>
        <end position="186"/>
    </location>
</feature>
<feature type="zinc finger region" description="CR-type" evidence="1">
    <location>
        <begin position="109"/>
        <end position="191"/>
    </location>
</feature>
<feature type="binding site" evidence="1">
    <location>
        <position position="122"/>
    </location>
    <ligand>
        <name>Zn(2+)</name>
        <dbReference type="ChEBI" id="CHEBI:29105"/>
        <label>1</label>
    </ligand>
</feature>
<feature type="binding site" evidence="1">
    <location>
        <position position="125"/>
    </location>
    <ligand>
        <name>Zn(2+)</name>
        <dbReference type="ChEBI" id="CHEBI:29105"/>
        <label>1</label>
    </ligand>
</feature>
<feature type="binding site" evidence="1">
    <location>
        <position position="139"/>
    </location>
    <ligand>
        <name>Zn(2+)</name>
        <dbReference type="ChEBI" id="CHEBI:29105"/>
        <label>2</label>
    </ligand>
</feature>
<feature type="binding site" evidence="1">
    <location>
        <position position="142"/>
    </location>
    <ligand>
        <name>Zn(2+)</name>
        <dbReference type="ChEBI" id="CHEBI:29105"/>
        <label>2</label>
    </ligand>
</feature>
<feature type="binding site" evidence="1">
    <location>
        <position position="165"/>
    </location>
    <ligand>
        <name>Zn(2+)</name>
        <dbReference type="ChEBI" id="CHEBI:29105"/>
        <label>2</label>
    </ligand>
</feature>
<feature type="binding site" evidence="1">
    <location>
        <position position="168"/>
    </location>
    <ligand>
        <name>Zn(2+)</name>
        <dbReference type="ChEBI" id="CHEBI:29105"/>
        <label>2</label>
    </ligand>
</feature>
<feature type="binding site" evidence="1">
    <location>
        <position position="179"/>
    </location>
    <ligand>
        <name>Zn(2+)</name>
        <dbReference type="ChEBI" id="CHEBI:29105"/>
        <label>1</label>
    </ligand>
</feature>
<feature type="binding site" evidence="1">
    <location>
        <position position="182"/>
    </location>
    <ligand>
        <name>Zn(2+)</name>
        <dbReference type="ChEBI" id="CHEBI:29105"/>
        <label>1</label>
    </ligand>
</feature>